<dbReference type="EMBL" id="AB128033">
    <property type="protein sequence ID" value="BAD24964.1"/>
    <property type="molecule type" value="mRNA"/>
</dbReference>
<dbReference type="EMBL" id="AY296058">
    <property type="protein sequence ID" value="AAQ62696.1"/>
    <property type="molecule type" value="mRNA"/>
</dbReference>
<dbReference type="EMBL" id="BC072555">
    <property type="protein sequence ID" value="AAH72555.1"/>
    <property type="molecule type" value="mRNA"/>
</dbReference>
<dbReference type="EMBL" id="BC082304">
    <property type="protein sequence ID" value="AAH82304.1"/>
    <property type="molecule type" value="mRNA"/>
</dbReference>
<dbReference type="CCDS" id="CCDS40601.1">
    <molecule id="Q67FY2-1"/>
</dbReference>
<dbReference type="CCDS" id="CCDS90549.1">
    <molecule id="Q67FY2-2"/>
</dbReference>
<dbReference type="RefSeq" id="NP_001344419.1">
    <molecule id="Q67FY2-2"/>
    <property type="nucleotide sequence ID" value="NM_001357490.2"/>
</dbReference>
<dbReference type="RefSeq" id="NP_001408236.1">
    <molecule id="Q67FY2-1"/>
    <property type="nucleotide sequence ID" value="NM_001421307.1"/>
</dbReference>
<dbReference type="RefSeq" id="NP_084532.2">
    <molecule id="Q67FY2-1"/>
    <property type="nucleotide sequence ID" value="NM_030256.4"/>
</dbReference>
<dbReference type="RefSeq" id="XP_006510764.1">
    <property type="nucleotide sequence ID" value="XM_006510701.3"/>
</dbReference>
<dbReference type="RefSeq" id="XP_006510765.1">
    <molecule id="Q67FY2-1"/>
    <property type="nucleotide sequence ID" value="XM_006510702.5"/>
</dbReference>
<dbReference type="RefSeq" id="XP_006510766.1">
    <molecule id="Q67FY2-1"/>
    <property type="nucleotide sequence ID" value="XM_006510703.4"/>
</dbReference>
<dbReference type="RefSeq" id="XP_006510767.1">
    <molecule id="Q67FY2-1"/>
    <property type="nucleotide sequence ID" value="XM_006510704.4"/>
</dbReference>
<dbReference type="RefSeq" id="XP_006510768.1">
    <property type="nucleotide sequence ID" value="XM_006510705.3"/>
</dbReference>
<dbReference type="RefSeq" id="XP_017169189.1">
    <property type="nucleotide sequence ID" value="XM_017313700.1"/>
</dbReference>
<dbReference type="RefSeq" id="XP_030100588.1">
    <molecule id="Q67FY2-2"/>
    <property type="nucleotide sequence ID" value="XM_030244728.1"/>
</dbReference>
<dbReference type="RefSeq" id="XP_036011305.1">
    <molecule id="Q67FY2-2"/>
    <property type="nucleotide sequence ID" value="XM_036155412.1"/>
</dbReference>
<dbReference type="SMR" id="Q67FY2"/>
<dbReference type="BioGRID" id="219776">
    <property type="interactions" value="3"/>
</dbReference>
<dbReference type="FunCoup" id="Q67FY2">
    <property type="interactions" value="2153"/>
</dbReference>
<dbReference type="IntAct" id="Q67FY2">
    <property type="interactions" value="6"/>
</dbReference>
<dbReference type="STRING" id="10090.ENSMUSP00000151837"/>
<dbReference type="GlyGen" id="Q67FY2">
    <property type="glycosylation" value="7 sites, 1 O-linked glycan (2 sites)"/>
</dbReference>
<dbReference type="iPTMnet" id="Q67FY2"/>
<dbReference type="PhosphoSitePlus" id="Q67FY2"/>
<dbReference type="jPOST" id="Q67FY2"/>
<dbReference type="PaxDb" id="10090-ENSMUSP00000074516"/>
<dbReference type="PeptideAtlas" id="Q67FY2"/>
<dbReference type="ProteomicsDB" id="273549">
    <molecule id="Q67FY2-1"/>
</dbReference>
<dbReference type="ProteomicsDB" id="273550">
    <molecule id="Q67FY2-2"/>
</dbReference>
<dbReference type="Pumba" id="Q67FY2"/>
<dbReference type="Antibodypedia" id="32548">
    <property type="antibodies" value="137 antibodies from 26 providers"/>
</dbReference>
<dbReference type="DNASU" id="80288"/>
<dbReference type="Ensembl" id="ENSMUST00000074989.7">
    <molecule id="Q67FY2-1"/>
    <property type="protein sequence ID" value="ENSMUSP00000074516.6"/>
    <property type="gene ID" value="ENSMUSG00000063382.7"/>
</dbReference>
<dbReference type="Ensembl" id="ENSMUST00000218183.2">
    <molecule id="Q67FY2-1"/>
    <property type="protein sequence ID" value="ENSMUSP00000151837.2"/>
    <property type="gene ID" value="ENSMUSG00000063382.7"/>
</dbReference>
<dbReference type="Ensembl" id="ENSMUST00000220303.2">
    <molecule id="Q67FY2-2"/>
    <property type="protein sequence ID" value="ENSMUSP00000151342.2"/>
    <property type="gene ID" value="ENSMUSG00000063382.7"/>
</dbReference>
<dbReference type="GeneID" id="80288"/>
<dbReference type="KEGG" id="mmu:80288"/>
<dbReference type="UCSC" id="uc009pdu.1">
    <molecule id="Q67FY2-1"/>
    <property type="organism name" value="mouse"/>
</dbReference>
<dbReference type="AGR" id="MGI:1933114"/>
<dbReference type="CTD" id="283149"/>
<dbReference type="MGI" id="MGI:1933114">
    <property type="gene designation" value="Bcl9l"/>
</dbReference>
<dbReference type="VEuPathDB" id="HostDB:ENSMUSG00000063382"/>
<dbReference type="eggNOG" id="ENOG502QR2B">
    <property type="taxonomic scope" value="Eukaryota"/>
</dbReference>
<dbReference type="GeneTree" id="ENSGT00730000110915"/>
<dbReference type="HOGENOM" id="CLU_004973_0_0_1"/>
<dbReference type="InParanoid" id="Q67FY2"/>
<dbReference type="OMA" id="NMMAEQP"/>
<dbReference type="OrthoDB" id="7668649at2759"/>
<dbReference type="PhylomeDB" id="Q67FY2"/>
<dbReference type="TreeFam" id="TF331144"/>
<dbReference type="Reactome" id="R-MMU-201722">
    <property type="pathway name" value="Formation of the beta-catenin:TCF transactivating complex"/>
</dbReference>
<dbReference type="BioGRID-ORCS" id="80288">
    <property type="hits" value="6 hits in 79 CRISPR screens"/>
</dbReference>
<dbReference type="ChiTaRS" id="Bcl9l">
    <property type="organism name" value="mouse"/>
</dbReference>
<dbReference type="PRO" id="PR:Q67FY2"/>
<dbReference type="Proteomes" id="UP000000589">
    <property type="component" value="Chromosome 9"/>
</dbReference>
<dbReference type="RNAct" id="Q67FY2">
    <property type="molecule type" value="protein"/>
</dbReference>
<dbReference type="Bgee" id="ENSMUSG00000063382">
    <property type="expression patterns" value="Expressed in neurocranium bone and 190 other cell types or tissues"/>
</dbReference>
<dbReference type="ExpressionAtlas" id="Q67FY2">
    <property type="expression patterns" value="baseline and differential"/>
</dbReference>
<dbReference type="GO" id="GO:1990907">
    <property type="term" value="C:beta-catenin-TCF complex"/>
    <property type="evidence" value="ECO:0007669"/>
    <property type="project" value="Ensembl"/>
</dbReference>
<dbReference type="GO" id="GO:0001650">
    <property type="term" value="C:fibrillar center"/>
    <property type="evidence" value="ECO:0007669"/>
    <property type="project" value="Ensembl"/>
</dbReference>
<dbReference type="GO" id="GO:0005654">
    <property type="term" value="C:nucleoplasm"/>
    <property type="evidence" value="ECO:0007669"/>
    <property type="project" value="Ensembl"/>
</dbReference>
<dbReference type="GO" id="GO:0005634">
    <property type="term" value="C:nucleus"/>
    <property type="evidence" value="ECO:0000314"/>
    <property type="project" value="MGI"/>
</dbReference>
<dbReference type="GO" id="GO:0008013">
    <property type="term" value="F:beta-catenin binding"/>
    <property type="evidence" value="ECO:0000353"/>
    <property type="project" value="MGI"/>
</dbReference>
<dbReference type="GO" id="GO:0003713">
    <property type="term" value="F:transcription coactivator activity"/>
    <property type="evidence" value="ECO:0007669"/>
    <property type="project" value="InterPro"/>
</dbReference>
<dbReference type="GO" id="GO:0060070">
    <property type="term" value="P:canonical Wnt signaling pathway"/>
    <property type="evidence" value="ECO:0000316"/>
    <property type="project" value="MGI"/>
</dbReference>
<dbReference type="GO" id="GO:0045445">
    <property type="term" value="P:myoblast differentiation"/>
    <property type="evidence" value="ECO:0000316"/>
    <property type="project" value="MGI"/>
</dbReference>
<dbReference type="GO" id="GO:0030512">
    <property type="term" value="P:negative regulation of transforming growth factor beta receptor signaling pathway"/>
    <property type="evidence" value="ECO:0007669"/>
    <property type="project" value="Ensembl"/>
</dbReference>
<dbReference type="GO" id="GO:0010718">
    <property type="term" value="P:positive regulation of epithelial to mesenchymal transition"/>
    <property type="evidence" value="ECO:0007669"/>
    <property type="project" value="Ensembl"/>
</dbReference>
<dbReference type="GO" id="GO:0045944">
    <property type="term" value="P:positive regulation of transcription by RNA polymerase II"/>
    <property type="evidence" value="ECO:0000316"/>
    <property type="project" value="MGI"/>
</dbReference>
<dbReference type="GO" id="GO:0022604">
    <property type="term" value="P:regulation of cell morphogenesis"/>
    <property type="evidence" value="ECO:0007669"/>
    <property type="project" value="Ensembl"/>
</dbReference>
<dbReference type="GO" id="GO:0035914">
    <property type="term" value="P:skeletal muscle cell differentiation"/>
    <property type="evidence" value="ECO:0000316"/>
    <property type="project" value="MGI"/>
</dbReference>
<dbReference type="GO" id="GO:0035019">
    <property type="term" value="P:somatic stem cell population maintenance"/>
    <property type="evidence" value="ECO:0000316"/>
    <property type="project" value="MGI"/>
</dbReference>
<dbReference type="GO" id="GO:0006366">
    <property type="term" value="P:transcription by RNA polymerase II"/>
    <property type="evidence" value="ECO:0000316"/>
    <property type="project" value="MGI"/>
</dbReference>
<dbReference type="Gene3D" id="3.30.40.10">
    <property type="entry name" value="Zinc/RING finger domain, C3HC4 (zinc finger)"/>
    <property type="match status" value="1"/>
</dbReference>
<dbReference type="InterPro" id="IPR015668">
    <property type="entry name" value="Bcl-9/Bcl-9l"/>
</dbReference>
<dbReference type="InterPro" id="IPR024670">
    <property type="entry name" value="BCL9_beta-catenin-bd_dom"/>
</dbReference>
<dbReference type="InterPro" id="IPR013083">
    <property type="entry name" value="Znf_RING/FYVE/PHD"/>
</dbReference>
<dbReference type="PANTHER" id="PTHR15185:SF3">
    <property type="entry name" value="B-CELL CLL_LYMPHOMA 9-LIKE PROTEIN"/>
    <property type="match status" value="1"/>
</dbReference>
<dbReference type="PANTHER" id="PTHR15185">
    <property type="entry name" value="BCL9"/>
    <property type="match status" value="1"/>
</dbReference>
<dbReference type="Pfam" id="PF11502">
    <property type="entry name" value="BCL9"/>
    <property type="match status" value="1"/>
</dbReference>
<protein>
    <recommendedName>
        <fullName>B-cell CLL/lymphoma 9-like protein</fullName>
        <shortName>B-cell lymphoma 9-like protein</shortName>
        <shortName>BCL9-like protein</shortName>
    </recommendedName>
    <alternativeName>
        <fullName>BCL9-related beta-catenin-binding protein</fullName>
    </alternativeName>
    <alternativeName>
        <fullName>Protein BCL9-2</fullName>
    </alternativeName>
</protein>
<sequence length="1494" mass="156680">MRILANKTRLPHPRRREAPGSPPLSPRGHCPPAPAKPMHPENKLTNHGKTGNGGAQSQHQNVNQGPTCNLGSKGVGAGSHGAKANQISPSNSSLKNPQAGVSPFSSLKGKVKRERSVSVDSGEQREAGTPSLDSEAKEVAPRSKRRCVLERKQPYSGDEWCSGPDSEEDDKPIAAAHNCNVADPAMVTPQLGPGQTAQLPLSESSAPGPQHGPQPGLRPDVPGGGGGGVPGKPPSQFVYVFTTHLANTAAEAVLQGRAESILAYHQQNVPRAKLDQAPKVPPTPEPLPLNTPSAGTPQSQPPPLPPPPPAPGSAPPALPPEGPPEDTSQDLAPNSVGAASTGGGTGGTHPNTPTAATANNPLPPGGDPGSAPGSALLGEATPTGNGQRNLVGSEGLSKEQLEHRERSLQTLRDIERLLLRSGETEPFLKGPPGGAGEGGPPAQAPSAAQPPPSAPPGGLKKYEEPLQSMISQTQSLGGPPLEHEVPGHPQGGDMGQQMNMMMQRLGQDSLTPEQVAWRKLQEEYYEEKRRKEEQIGLHGGRPLQDMVGMGGMMGRGPPPPYHSKPGDQWPPGMGAQLRGPMDVQDPMQLRPGPPFPGPRFPGNQMQRVPGFGGMQSMPMEVPMNAMQRPVRPGMAWNEDLPPIGGPSNFAQNAVPYPGGQGEAERFMTPRVREELLRHQLLEKRSMGMQRPLGMAGSGMGQSMEMERMIQAHRQMDPAMFPGQMTGGDGLAGTPMGIEFGGGRGLLSPPMGQSGLREVDPPMGPGNLNMNMNVNMNMNMNLNVQMTPQQQMLMSQKMRGPGDMMGPQGLSPEEMARVRAQNSSGMMGGPQKMLMPSQFPNQGQQGFSGGQGPYQAMPQDMGNTPDMFSPDQSSVPMGTVGTARLSHMPLPPASNPPGSVHLASNRGLGRRPSDLTISINQMGSPGMGHLKSPTLSQVHSPLVTSPSANLKSPQTPSQMVPLPSANPPGPLKSPQVLSSSLGVRSPTGSPSRLKSPSMAVPSPGWVASPKTAMPSPGVSQNKQPPLSINSSSTLGNVEQGALPPSAPRNSSSAPPANPSSGLMNPSLPFTSSPDPTPSQNPLSLMMSQMSKYAMPSSTPLYHNAIKTIATSDDELLPDRPLLPPPPPPQGSGPGISNNQPNQMHMNPAAAQSPMGMNLPGQQPLSHEPPPTMLPSPTPLGSNIPLHPNAQGTGGSSQNSMMMAPGGPDSLNAPCGPVPSSSQMMSFPPRLQQPHGAMAPTGAGGPGLQQHYPSGMALPPEDLPTQPPGPIPPQQHLMGKGMTGRMGDAYPPGVLPGVASVLNDPELSEVIRPTPTGIPEFDLSRIIPSEKPSSTLQYFPKSENQPPKAQPPNLHLMNLQNMMAEQTPSRPPNLPGQQGVQRGLSMSMCHPGQMSLLGRTGVPPQQGMVPHGLHQGVMSPPQGLMTQQNFMLMKQRGVGGEVYTQPPHMLSPQGSLMGPPPQQNLMVSHPLRQRSVSLDSQMGYLPTPGSMANLPF</sequence>
<reference key="1">
    <citation type="journal article" date="2004" name="Cancer Res.">
        <title>Role of a BCL9-related beta-catenin-binding protein, B9L, in tumorigenesis induced by aberrant activation of Wnt signaling.</title>
        <authorList>
            <person name="Adachi S."/>
            <person name="Jigami T."/>
            <person name="Yasui T."/>
            <person name="Nakano T."/>
            <person name="Ohwada S."/>
            <person name="Omori Y."/>
            <person name="Sugano S."/>
            <person name="Ohkawara B."/>
            <person name="Shibuya H."/>
            <person name="Nakamura T."/>
            <person name="Akiyama T."/>
        </authorList>
    </citation>
    <scope>NUCLEOTIDE SEQUENCE [MRNA] (ISOFORM 1)</scope>
    <scope>INTERACTION WITH CTNNB1</scope>
    <scope>DEVELOPMENTAL STAGE</scope>
    <scope>SUBCELLULAR LOCATION</scope>
    <scope>TISSUE SPECIFICITY</scope>
    <source>
        <tissue>Embryo</tissue>
    </source>
</reference>
<reference key="2">
    <citation type="journal article" date="2004" name="Genes Dev.">
        <title>Essential role of BCL9-2 in the switch between beta-catenin's adhesive and transcriptional functions.</title>
        <authorList>
            <person name="Brembeck F.H."/>
            <person name="Schwarz-Romond T."/>
            <person name="Bakkers J."/>
            <person name="Wilhelm S."/>
            <person name="Hammerschmidt M."/>
            <person name="Birchmeier W."/>
        </authorList>
    </citation>
    <scope>NUCLEOTIDE SEQUENCE [MRNA] (ISOFORM 2)</scope>
    <scope>FUNCTION</scope>
    <scope>INTERACTION WITH CTNNB1</scope>
</reference>
<reference key="3">
    <citation type="journal article" date="2004" name="Genome Res.">
        <title>The status, quality, and expansion of the NIH full-length cDNA project: the Mammalian Gene Collection (MGC).</title>
        <authorList>
            <consortium name="The MGC Project Team"/>
        </authorList>
    </citation>
    <scope>NUCLEOTIDE SEQUENCE [LARGE SCALE MRNA] (ISOFORM 2)</scope>
    <scope>NUCLEOTIDE SEQUENCE [LARGE SCALE MRNA] OF 1091-1494 (ISOFORM 1/2)</scope>
    <source>
        <strain>C57BL/6J</strain>
        <tissue>Brain</tissue>
    </source>
</reference>
<reference key="4">
    <citation type="journal article" date="2006" name="Mol. Cell">
        <title>Crystal structure of a beta-catenin/BCL9/Tcf4 complex.</title>
        <authorList>
            <person name="Sampietro J."/>
            <person name="Dahlberg C.L."/>
            <person name="Cho U.S."/>
            <person name="Hinds T.R."/>
            <person name="Kimelman D."/>
            <person name="Xu W."/>
        </authorList>
    </citation>
    <scope>INTERACTION WITH CTNNB1</scope>
</reference>
<reference key="5">
    <citation type="journal article" date="2007" name="Proc. Natl. Acad. Sci. U.S.A.">
        <title>Large-scale phosphorylation analysis of mouse liver.</title>
        <authorList>
            <person name="Villen J."/>
            <person name="Beausoleil S.A."/>
            <person name="Gerber S.A."/>
            <person name="Gygi S.P."/>
        </authorList>
    </citation>
    <scope>PHOSPHORYLATION [LARGE SCALE ANALYSIS] AT SER-994; SER-1001 AND SER-1007</scope>
    <scope>IDENTIFICATION BY MASS SPECTROMETRY [LARGE SCALE ANALYSIS]</scope>
    <source>
        <tissue>Liver</tissue>
    </source>
</reference>
<reference key="6">
    <citation type="journal article" date="2010" name="Cell">
        <title>A tissue-specific atlas of mouse protein phosphorylation and expression.</title>
        <authorList>
            <person name="Huttlin E.L."/>
            <person name="Jedrychowski M.P."/>
            <person name="Elias J.E."/>
            <person name="Goswami T."/>
            <person name="Rad R."/>
            <person name="Beausoleil S.A."/>
            <person name="Villen J."/>
            <person name="Haas W."/>
            <person name="Sowa M.E."/>
            <person name="Gygi S.P."/>
        </authorList>
    </citation>
    <scope>PHOSPHORYLATION [LARGE SCALE ANALYSIS] AT SER-912; SER-923; SER-939; SER-944; SER-984; SER-988; SER-994; SER-1001 AND SER-1007</scope>
    <scope>IDENTIFICATION BY MASS SPECTROMETRY [LARGE SCALE ANALYSIS]</scope>
    <source>
        <tissue>Brain</tissue>
        <tissue>Brown adipose tissue</tissue>
        <tissue>Kidney</tissue>
        <tissue>Liver</tissue>
        <tissue>Lung</tissue>
        <tissue>Spleen</tissue>
        <tissue>Testis</tissue>
    </source>
</reference>
<reference key="7">
    <citation type="journal article" date="2013" name="Mol. Cell">
        <title>SIRT5-mediated lysine desuccinylation impacts diverse metabolic pathways.</title>
        <authorList>
            <person name="Park J."/>
            <person name="Chen Y."/>
            <person name="Tishkoff D.X."/>
            <person name="Peng C."/>
            <person name="Tan M."/>
            <person name="Dai L."/>
            <person name="Xie Z."/>
            <person name="Zhang Y."/>
            <person name="Zwaans B.M."/>
            <person name="Skinner M.E."/>
            <person name="Lombard D.B."/>
            <person name="Zhao Y."/>
        </authorList>
    </citation>
    <scope>ACETYLATION [LARGE SCALE ANALYSIS] AT LYS-36; LYS-108; LYS-110 AND LYS-137</scope>
    <scope>IDENTIFICATION BY MASS SPECTROMETRY [LARGE SCALE ANALYSIS]</scope>
    <source>
        <tissue>Embryonic fibroblast</tissue>
    </source>
</reference>
<reference key="8">
    <citation type="journal article" date="2014" name="Mol. Cell. Proteomics">
        <title>Immunoaffinity enrichment and mass spectrometry analysis of protein methylation.</title>
        <authorList>
            <person name="Guo A."/>
            <person name="Gu H."/>
            <person name="Zhou J."/>
            <person name="Mulhern D."/>
            <person name="Wang Y."/>
            <person name="Lee K.A."/>
            <person name="Yang V."/>
            <person name="Aguiar M."/>
            <person name="Kornhauser J."/>
            <person name="Jia X."/>
            <person name="Ren J."/>
            <person name="Beausoleil S.A."/>
            <person name="Silva J.C."/>
            <person name="Vemulapalli V."/>
            <person name="Bedford M.T."/>
            <person name="Comb M.J."/>
        </authorList>
    </citation>
    <scope>METHYLATION [LARGE SCALE ANALYSIS] AT ARG-677</scope>
    <scope>IDENTIFICATION BY MASS SPECTROMETRY [LARGE SCALE ANALYSIS]</scope>
    <source>
        <tissue>Embryo</tissue>
    </source>
</reference>
<name>BCL9L_MOUSE</name>
<feature type="chain" id="PRO_0000314080" description="B-cell CLL/lymphoma 9-like protein">
    <location>
        <begin position="1"/>
        <end position="1494"/>
    </location>
</feature>
<feature type="region of interest" description="Disordered" evidence="3">
    <location>
        <begin position="1"/>
        <end position="236"/>
    </location>
</feature>
<feature type="region of interest" description="Disordered" evidence="3">
    <location>
        <begin position="269"/>
        <end position="496"/>
    </location>
</feature>
<feature type="region of interest" description="Necessary for interaction with CTNNB1">
    <location>
        <begin position="302"/>
        <end position="530"/>
    </location>
</feature>
<feature type="region of interest" description="Disordered" evidence="3">
    <location>
        <begin position="905"/>
        <end position="1082"/>
    </location>
</feature>
<feature type="region of interest" description="Disordered" evidence="3">
    <location>
        <begin position="1113"/>
        <end position="1206"/>
    </location>
</feature>
<feature type="compositionally biased region" description="Pro residues" evidence="3">
    <location>
        <begin position="20"/>
        <end position="37"/>
    </location>
</feature>
<feature type="compositionally biased region" description="Polar residues" evidence="3">
    <location>
        <begin position="45"/>
        <end position="70"/>
    </location>
</feature>
<feature type="compositionally biased region" description="Polar residues" evidence="3">
    <location>
        <begin position="85"/>
        <end position="96"/>
    </location>
</feature>
<feature type="compositionally biased region" description="Basic and acidic residues" evidence="3">
    <location>
        <begin position="114"/>
        <end position="126"/>
    </location>
</feature>
<feature type="compositionally biased region" description="Basic and acidic residues" evidence="3">
    <location>
        <begin position="134"/>
        <end position="153"/>
    </location>
</feature>
<feature type="compositionally biased region" description="Polar residues" evidence="3">
    <location>
        <begin position="193"/>
        <end position="207"/>
    </location>
</feature>
<feature type="compositionally biased region" description="Pro residues" evidence="3">
    <location>
        <begin position="279"/>
        <end position="289"/>
    </location>
</feature>
<feature type="compositionally biased region" description="Pro residues" evidence="3">
    <location>
        <begin position="299"/>
        <end position="322"/>
    </location>
</feature>
<feature type="compositionally biased region" description="Low complexity" evidence="3">
    <location>
        <begin position="348"/>
        <end position="360"/>
    </location>
</feature>
<feature type="compositionally biased region" description="Basic and acidic residues" evidence="3">
    <location>
        <begin position="396"/>
        <end position="418"/>
    </location>
</feature>
<feature type="compositionally biased region" description="Polar residues" evidence="3">
    <location>
        <begin position="932"/>
        <end position="957"/>
    </location>
</feature>
<feature type="compositionally biased region" description="Polar residues" evidence="3">
    <location>
        <begin position="974"/>
        <end position="993"/>
    </location>
</feature>
<feature type="compositionally biased region" description="Polar residues" evidence="3">
    <location>
        <begin position="1016"/>
        <end position="1035"/>
    </location>
</feature>
<feature type="compositionally biased region" description="Low complexity" evidence="3">
    <location>
        <begin position="1046"/>
        <end position="1059"/>
    </location>
</feature>
<feature type="compositionally biased region" description="Polar residues" evidence="3">
    <location>
        <begin position="1060"/>
        <end position="1082"/>
    </location>
</feature>
<feature type="compositionally biased region" description="Pro residues" evidence="3">
    <location>
        <begin position="1119"/>
        <end position="1129"/>
    </location>
</feature>
<feature type="compositionally biased region" description="Polar residues" evidence="3">
    <location>
        <begin position="1133"/>
        <end position="1143"/>
    </location>
</feature>
<feature type="compositionally biased region" description="Pro residues" evidence="3">
    <location>
        <begin position="1165"/>
        <end position="1176"/>
    </location>
</feature>
<feature type="modified residue" description="Phosphoserine" evidence="2">
    <location>
        <position position="21"/>
    </location>
</feature>
<feature type="modified residue" description="Phosphoserine" evidence="2">
    <location>
        <position position="25"/>
    </location>
</feature>
<feature type="modified residue" description="N6-acetyllysine" evidence="12">
    <location>
        <position position="36"/>
    </location>
</feature>
<feature type="modified residue" description="Phosphoserine" evidence="2">
    <location>
        <position position="88"/>
    </location>
</feature>
<feature type="modified residue" description="N6-acetyllysine" evidence="12">
    <location>
        <position position="108"/>
    </location>
</feature>
<feature type="modified residue" description="N6-acetyllysine" evidence="12">
    <location>
        <position position="110"/>
    </location>
</feature>
<feature type="modified residue" description="Phosphoserine" evidence="2">
    <location>
        <position position="116"/>
    </location>
</feature>
<feature type="modified residue" description="Phosphoserine" evidence="2">
    <location>
        <position position="118"/>
    </location>
</feature>
<feature type="modified residue" description="N6-acetyllysine" evidence="12">
    <location>
        <position position="137"/>
    </location>
</feature>
<feature type="modified residue" description="Phosphoserine" evidence="2">
    <location>
        <position position="421"/>
    </location>
</feature>
<feature type="modified residue" description="Phosphothreonine" evidence="2">
    <location>
        <position position="511"/>
    </location>
</feature>
<feature type="modified residue" description="Asymmetric dimethylarginine" evidence="13">
    <location>
        <position position="677"/>
    </location>
</feature>
<feature type="modified residue" description="Phosphoserine" evidence="2">
    <location>
        <position position="747"/>
    </location>
</feature>
<feature type="modified residue" description="Phosphoserine" evidence="2">
    <location>
        <position position="810"/>
    </location>
</feature>
<feature type="modified residue" description="Phosphoserine" evidence="11">
    <location>
        <position position="912"/>
    </location>
</feature>
<feature type="modified residue" description="Phosphoserine" evidence="11">
    <location>
        <position position="923"/>
    </location>
</feature>
<feature type="modified residue" description="Phosphoserine" evidence="2">
    <location>
        <position position="935"/>
    </location>
</feature>
<feature type="modified residue" description="Phosphoserine" evidence="11">
    <location>
        <position position="939"/>
    </location>
</feature>
<feature type="modified residue" description="Phosphoserine" evidence="11">
    <location>
        <position position="944"/>
    </location>
</feature>
<feature type="modified residue" description="Phosphoserine" evidence="2">
    <location>
        <position position="972"/>
    </location>
</feature>
<feature type="modified residue" description="Phosphoserine" evidence="11">
    <location>
        <position position="984"/>
    </location>
</feature>
<feature type="modified residue" description="Phosphoserine" evidence="11">
    <location>
        <position position="988"/>
    </location>
</feature>
<feature type="modified residue" description="Phosphoserine" evidence="10 11">
    <location>
        <position position="994"/>
    </location>
</feature>
<feature type="modified residue" description="Phosphoserine" evidence="10 11">
    <location>
        <position position="1001"/>
    </location>
</feature>
<feature type="modified residue" description="Phosphoserine" evidence="10 11">
    <location>
        <position position="1007"/>
    </location>
</feature>
<feature type="modified residue" description="Phosphoserine" evidence="2">
    <location>
        <position position="1014"/>
    </location>
</feature>
<feature type="cross-link" description="Glycyl lysine isopeptide (Lys-Gly) (interchain with G-Cter in SUMO2)" evidence="2">
    <location>
        <position position="1339"/>
    </location>
</feature>
<feature type="splice variant" id="VSP_030209" description="In isoform 2." evidence="7 8">
    <location>
        <begin position="1"/>
        <end position="37"/>
    </location>
</feature>
<feature type="sequence conflict" description="In Ref. 1; BAD24964." evidence="9" ref="1">
    <original>WP</original>
    <variation>CA</variation>
    <location>
        <begin position="569"/>
        <end position="570"/>
    </location>
</feature>
<comment type="function">
    <text evidence="4">Transcriptional regulator that acts as an activator. Promotes beta-catenin transcriptional activity. Plays a role in tumorigenesis. Enhances the neoplastic transforming activity of CTNNB1.</text>
</comment>
<comment type="subunit">
    <text evidence="1 4 5 6">Found in a complex with CDC73; CTNNB1 and PYGO1 (By similarity). Interacts with CTNNB1.</text>
</comment>
<comment type="interaction">
    <interactant intactId="EBI-5234367">
        <id>Q67FY2</id>
    </interactant>
    <interactant intactId="EBI-491549">
        <id>P35222</id>
        <label>CTNNB1</label>
    </interactant>
    <organismsDiffer>true</organismsDiffer>
    <experiments>2</experiments>
</comment>
<comment type="interaction">
    <interactant intactId="EBI-5234367">
        <id>Q67FY2</id>
    </interactant>
    <interactant intactId="EBI-4320739">
        <id>Q9NZC7</id>
        <label>WWOX</label>
    </interactant>
    <organismsDiffer>true</organismsDiffer>
    <experiments>3</experiments>
</comment>
<comment type="subcellular location">
    <subcellularLocation>
        <location evidence="5">Nucleus</location>
    </subcellularLocation>
    <text>localized also in punctate nuclear bodies as well in the cytoplasm. Colocalizes with CTNNB1.</text>
</comment>
<comment type="alternative products">
    <event type="alternative splicing"/>
    <isoform>
        <id>Q67FY2-1</id>
        <name>1</name>
        <sequence type="displayed"/>
    </isoform>
    <isoform>
        <id>Q67FY2-2</id>
        <name>2</name>
        <sequence type="described" ref="VSP_030209"/>
    </isoform>
</comment>
<comment type="tissue specificity">
    <text evidence="5">Expressed in kidney, liver, lung, testis, brain, spleen, heart and skeletal muscle. Highly expressed in numerous colorectal tumors compared to corresponding non-cancerous tissues.</text>
</comment>
<comment type="developmental stage">
    <text evidence="5">Expressed in embryo.</text>
</comment>
<comment type="domain">
    <text>Tne C-terminal domain is important for its transactivation activity.</text>
</comment>
<comment type="similarity">
    <text evidence="9">Belongs to the BCL9 family.</text>
</comment>
<gene>
    <name type="primary">Bcl9l</name>
    <name type="synonym">B9l</name>
</gene>
<accession>Q67FY2</accession>
<accession>Q641L9</accession>
<accession>Q6GQY0</accession>
<accession>Q6I7B5</accession>
<evidence type="ECO:0000250" key="1"/>
<evidence type="ECO:0000250" key="2">
    <source>
        <dbReference type="UniProtKB" id="Q86UU0"/>
    </source>
</evidence>
<evidence type="ECO:0000256" key="3">
    <source>
        <dbReference type="SAM" id="MobiDB-lite"/>
    </source>
</evidence>
<evidence type="ECO:0000269" key="4">
    <source>
    </source>
</evidence>
<evidence type="ECO:0000269" key="5">
    <source>
    </source>
</evidence>
<evidence type="ECO:0000269" key="6">
    <source>
    </source>
</evidence>
<evidence type="ECO:0000303" key="7">
    <source>
    </source>
</evidence>
<evidence type="ECO:0000303" key="8">
    <source>
    </source>
</evidence>
<evidence type="ECO:0000305" key="9"/>
<evidence type="ECO:0007744" key="10">
    <source>
    </source>
</evidence>
<evidence type="ECO:0007744" key="11">
    <source>
    </source>
</evidence>
<evidence type="ECO:0007744" key="12">
    <source>
    </source>
</evidence>
<evidence type="ECO:0007744" key="13">
    <source>
    </source>
</evidence>
<organism>
    <name type="scientific">Mus musculus</name>
    <name type="common">Mouse</name>
    <dbReference type="NCBI Taxonomy" id="10090"/>
    <lineage>
        <taxon>Eukaryota</taxon>
        <taxon>Metazoa</taxon>
        <taxon>Chordata</taxon>
        <taxon>Craniata</taxon>
        <taxon>Vertebrata</taxon>
        <taxon>Euteleostomi</taxon>
        <taxon>Mammalia</taxon>
        <taxon>Eutheria</taxon>
        <taxon>Euarchontoglires</taxon>
        <taxon>Glires</taxon>
        <taxon>Rodentia</taxon>
        <taxon>Myomorpha</taxon>
        <taxon>Muroidea</taxon>
        <taxon>Muridae</taxon>
        <taxon>Murinae</taxon>
        <taxon>Mus</taxon>
        <taxon>Mus</taxon>
    </lineage>
</organism>
<keyword id="KW-0007">Acetylation</keyword>
<keyword id="KW-0010">Activator</keyword>
<keyword id="KW-0025">Alternative splicing</keyword>
<keyword id="KW-1017">Isopeptide bond</keyword>
<keyword id="KW-0488">Methylation</keyword>
<keyword id="KW-0539">Nucleus</keyword>
<keyword id="KW-0597">Phosphoprotein</keyword>
<keyword id="KW-1185">Reference proteome</keyword>
<keyword id="KW-0804">Transcription</keyword>
<keyword id="KW-0805">Transcription regulation</keyword>
<keyword id="KW-0832">Ubl conjugation</keyword>
<proteinExistence type="evidence at protein level"/>